<comment type="function">
    <text evidence="1">Transcription factor that activates the LYN and BLK promoters.</text>
</comment>
<comment type="subunit">
    <text evidence="1">Binds to the underphosphorylated form of RB. May interact with other transcription factors in order to regulate specific genes. Interacts with RUNX1 (By similarity).</text>
</comment>
<comment type="subcellular location">
    <subcellularLocation>
        <location evidence="3">Nucleus</location>
    </subcellularLocation>
</comment>
<comment type="similarity">
    <text evidence="5">Belongs to the ETS family.</text>
</comment>
<dbReference type="EMBL" id="BC126517">
    <property type="protein sequence ID" value="AAI26518.1"/>
    <property type="molecule type" value="mRNA"/>
</dbReference>
<dbReference type="RefSeq" id="NP_001071321.1">
    <property type="nucleotide sequence ID" value="NM_001077853.1"/>
</dbReference>
<dbReference type="RefSeq" id="XP_005213624.1">
    <property type="nucleotide sequence ID" value="XM_005213567.5"/>
</dbReference>
<dbReference type="RefSeq" id="XP_024855555.1">
    <property type="nucleotide sequence ID" value="XM_024999787.2"/>
</dbReference>
<dbReference type="RefSeq" id="XP_059747954.1">
    <property type="nucleotide sequence ID" value="XM_059891971.1"/>
</dbReference>
<dbReference type="RefSeq" id="XP_059747955.1">
    <property type="nucleotide sequence ID" value="XM_059891972.1"/>
</dbReference>
<dbReference type="RefSeq" id="XP_059747956.1">
    <property type="nucleotide sequence ID" value="XM_059891973.1"/>
</dbReference>
<dbReference type="RefSeq" id="XP_059747957.1">
    <property type="nucleotide sequence ID" value="XM_059891974.1"/>
</dbReference>
<dbReference type="RefSeq" id="XP_059747958.1">
    <property type="nucleotide sequence ID" value="XM_059891975.1"/>
</dbReference>
<dbReference type="RefSeq" id="XP_059747959.1">
    <property type="nucleotide sequence ID" value="XM_059891976.1"/>
</dbReference>
<dbReference type="SMR" id="A0JN51"/>
<dbReference type="FunCoup" id="A0JN51">
    <property type="interactions" value="1212"/>
</dbReference>
<dbReference type="STRING" id="9913.ENSBTAP00000009677"/>
<dbReference type="PaxDb" id="9913-ENSBTAP00000009677"/>
<dbReference type="Ensembl" id="ENSBTAT00000009677.6">
    <property type="protein sequence ID" value="ENSBTAP00000009677.4"/>
    <property type="gene ID" value="ENSBTAG00000007356.7"/>
</dbReference>
<dbReference type="GeneID" id="505251"/>
<dbReference type="KEGG" id="bta:505251"/>
<dbReference type="CTD" id="1997"/>
<dbReference type="VEuPathDB" id="HostDB:ENSBTAG00000007356"/>
<dbReference type="VGNC" id="VGNC:28426">
    <property type="gene designation" value="ELF1"/>
</dbReference>
<dbReference type="eggNOG" id="KOG3804">
    <property type="taxonomic scope" value="Eukaryota"/>
</dbReference>
<dbReference type="GeneTree" id="ENSGT00940000157039"/>
<dbReference type="HOGENOM" id="CLU_027279_1_0_1"/>
<dbReference type="InParanoid" id="A0JN51"/>
<dbReference type="OMA" id="DEKRMTT"/>
<dbReference type="OrthoDB" id="8196042at2759"/>
<dbReference type="TreeFam" id="TF318679"/>
<dbReference type="Reactome" id="R-BTA-8939247">
    <property type="pathway name" value="RUNX1 regulates transcription of genes involved in interleukin signaling"/>
</dbReference>
<dbReference type="Proteomes" id="UP000009136">
    <property type="component" value="Chromosome 12"/>
</dbReference>
<dbReference type="Bgee" id="ENSBTAG00000007356">
    <property type="expression patterns" value="Expressed in thymus and 106 other cell types or tissues"/>
</dbReference>
<dbReference type="GO" id="GO:0005634">
    <property type="term" value="C:nucleus"/>
    <property type="evidence" value="ECO:0000318"/>
    <property type="project" value="GO_Central"/>
</dbReference>
<dbReference type="GO" id="GO:0001228">
    <property type="term" value="F:DNA-binding transcription activator activity, RNA polymerase II-specific"/>
    <property type="evidence" value="ECO:0007669"/>
    <property type="project" value="Ensembl"/>
</dbReference>
<dbReference type="GO" id="GO:0000981">
    <property type="term" value="F:DNA-binding transcription factor activity, RNA polymerase II-specific"/>
    <property type="evidence" value="ECO:0000318"/>
    <property type="project" value="GO_Central"/>
</dbReference>
<dbReference type="GO" id="GO:0000978">
    <property type="term" value="F:RNA polymerase II cis-regulatory region sequence-specific DNA binding"/>
    <property type="evidence" value="ECO:0007669"/>
    <property type="project" value="Ensembl"/>
</dbReference>
<dbReference type="GO" id="GO:0030154">
    <property type="term" value="P:cell differentiation"/>
    <property type="evidence" value="ECO:0000318"/>
    <property type="project" value="GO_Central"/>
</dbReference>
<dbReference type="GO" id="GO:0050860">
    <property type="term" value="P:negative regulation of T cell receptor signaling pathway"/>
    <property type="evidence" value="ECO:0007669"/>
    <property type="project" value="Ensembl"/>
</dbReference>
<dbReference type="GO" id="GO:0001817">
    <property type="term" value="P:regulation of cytokine production"/>
    <property type="evidence" value="ECO:0007669"/>
    <property type="project" value="Ensembl"/>
</dbReference>
<dbReference type="GO" id="GO:0006357">
    <property type="term" value="P:regulation of transcription by RNA polymerase II"/>
    <property type="evidence" value="ECO:0000318"/>
    <property type="project" value="GO_Central"/>
</dbReference>
<dbReference type="FunFam" id="1.10.10.10:FF:000066">
    <property type="entry name" value="ETS-related transcription factor Elf-2 isoform X1"/>
    <property type="match status" value="1"/>
</dbReference>
<dbReference type="Gene3D" id="1.10.10.10">
    <property type="entry name" value="Winged helix-like DNA-binding domain superfamily/Winged helix DNA-binding domain"/>
    <property type="match status" value="1"/>
</dbReference>
<dbReference type="InterPro" id="IPR000418">
    <property type="entry name" value="Ets_dom"/>
</dbReference>
<dbReference type="InterPro" id="IPR046328">
    <property type="entry name" value="ETS_fam"/>
</dbReference>
<dbReference type="InterPro" id="IPR022084">
    <property type="entry name" value="TF_Elf_N"/>
</dbReference>
<dbReference type="InterPro" id="IPR036388">
    <property type="entry name" value="WH-like_DNA-bd_sf"/>
</dbReference>
<dbReference type="InterPro" id="IPR036390">
    <property type="entry name" value="WH_DNA-bd_sf"/>
</dbReference>
<dbReference type="PANTHER" id="PTHR11849">
    <property type="entry name" value="ETS"/>
    <property type="match status" value="1"/>
</dbReference>
<dbReference type="PANTHER" id="PTHR11849:SF156">
    <property type="entry name" value="ETS-RELATED TRANSCRIPTION FACTOR ELF-1"/>
    <property type="match status" value="1"/>
</dbReference>
<dbReference type="Pfam" id="PF12310">
    <property type="entry name" value="Elf-1_N"/>
    <property type="match status" value="1"/>
</dbReference>
<dbReference type="Pfam" id="PF00178">
    <property type="entry name" value="Ets"/>
    <property type="match status" value="1"/>
</dbReference>
<dbReference type="PRINTS" id="PR00454">
    <property type="entry name" value="ETSDOMAIN"/>
</dbReference>
<dbReference type="SMART" id="SM00413">
    <property type="entry name" value="ETS"/>
    <property type="match status" value="1"/>
</dbReference>
<dbReference type="SUPFAM" id="SSF46785">
    <property type="entry name" value="Winged helix' DNA-binding domain"/>
    <property type="match status" value="1"/>
</dbReference>
<dbReference type="PROSITE" id="PS00345">
    <property type="entry name" value="ETS_DOMAIN_1"/>
    <property type="match status" value="1"/>
</dbReference>
<dbReference type="PROSITE" id="PS00346">
    <property type="entry name" value="ETS_DOMAIN_2"/>
    <property type="match status" value="1"/>
</dbReference>
<dbReference type="PROSITE" id="PS50061">
    <property type="entry name" value="ETS_DOMAIN_3"/>
    <property type="match status" value="1"/>
</dbReference>
<proteinExistence type="evidence at transcript level"/>
<feature type="chain" id="PRO_0000287130" description="ETS-related transcription factor Elf-1">
    <location>
        <begin position="1"/>
        <end position="614"/>
    </location>
</feature>
<feature type="DNA-binding region" description="ETS" evidence="3">
    <location>
        <begin position="208"/>
        <end position="290"/>
    </location>
</feature>
<feature type="region of interest" description="Disordered" evidence="4">
    <location>
        <begin position="159"/>
        <end position="199"/>
    </location>
</feature>
<feature type="region of interest" description="Disordered" evidence="4">
    <location>
        <begin position="303"/>
        <end position="371"/>
    </location>
</feature>
<feature type="compositionally biased region" description="Basic residues" evidence="4">
    <location>
        <begin position="173"/>
        <end position="182"/>
    </location>
</feature>
<feature type="compositionally biased region" description="Low complexity" evidence="4">
    <location>
        <begin position="310"/>
        <end position="335"/>
    </location>
</feature>
<feature type="modified residue" description="Phosphoserine" evidence="2">
    <location>
        <position position="110"/>
    </location>
</feature>
<feature type="modified residue" description="Phosphoserine" evidence="2">
    <location>
        <position position="163"/>
    </location>
</feature>
<feature type="modified residue" description="Phosphoserine" evidence="2">
    <location>
        <position position="167"/>
    </location>
</feature>
<feature type="modified residue" description="Phosphoserine" evidence="2">
    <location>
        <position position="168"/>
    </location>
</feature>
<feature type="modified residue" description="Phosphoserine" evidence="2">
    <location>
        <position position="187"/>
    </location>
</feature>
<feature type="modified residue" description="Phosphothreonine" evidence="2">
    <location>
        <position position="190"/>
    </location>
</feature>
<feature type="modified residue" description="Phosphoserine" evidence="2">
    <location>
        <position position="430"/>
    </location>
</feature>
<accession>A0JN51</accession>
<sequence>MAAVVQQNDLVFEFASNVMEDEQQLGDPAIFPAVIVEHVPGADILNSYAGLACVEEPNDMITESSLDVAEEEIIDEDEDDITLTVEASCHNGDETIETIEAAEALLNMDSPGPMLDEKRMNNSIFSSSEDDMVVAPVTHVSVTLDGIPEVMETQHVQETYAHSPGPSSPEQPKRKKGRKTKPPRPDSPTTTPNISVKKKNKDGKGNTIYLWEFLLALLQDKATCPKYIKWTQREKGIFKLVDSKAVSRLWGKHKNKPDMNYETMGRALRYYYQRGILAKVEGQRLVYQFKDMPKDLIYIDDEDPSCSIESSDPSLSSTATSSRNPASRSRASSSPGIKGGATTVLKPGNSKAAKPKDPMEPVQPSEALRTVQSTQAPYPTQLFRTIHVVQPVQAVPEAEAASSMPEETLNPSVPSIRTIQTPAQVPVVVSPGNQHLHTVTLQTVPITTVIASADPSSAAGSQKFILQAIPSSQPMTVLKENVVLQSQKPGSPPSIVLSPAHVQQVLTSSVPTVCNGTVSAASAPSFSATTPMVTFSHHSSQLVAHPPGTVITSVIKAQEAKTHIQEEVKKEVEDNEKQGTEDAEQQLQPYVMVVSNGFPSQAAIKNELLEPSSF</sequence>
<protein>
    <recommendedName>
        <fullName>ETS-related transcription factor Elf-1</fullName>
    </recommendedName>
    <alternativeName>
        <fullName>E74-like factor 1</fullName>
    </alternativeName>
</protein>
<reference key="1">
    <citation type="submission" date="2006-10" db="EMBL/GenBank/DDBJ databases">
        <authorList>
            <consortium name="NIH - Mammalian Gene Collection (MGC) project"/>
        </authorList>
    </citation>
    <scope>NUCLEOTIDE SEQUENCE [LARGE SCALE MRNA]</scope>
    <source>
        <strain>Hereford</strain>
        <tissue>Fetal skin</tissue>
    </source>
</reference>
<keyword id="KW-0010">Activator</keyword>
<keyword id="KW-0238">DNA-binding</keyword>
<keyword id="KW-0539">Nucleus</keyword>
<keyword id="KW-0597">Phosphoprotein</keyword>
<keyword id="KW-1185">Reference proteome</keyword>
<keyword id="KW-0804">Transcription</keyword>
<keyword id="KW-0805">Transcription regulation</keyword>
<gene>
    <name type="primary">ELF1</name>
</gene>
<organism>
    <name type="scientific">Bos taurus</name>
    <name type="common">Bovine</name>
    <dbReference type="NCBI Taxonomy" id="9913"/>
    <lineage>
        <taxon>Eukaryota</taxon>
        <taxon>Metazoa</taxon>
        <taxon>Chordata</taxon>
        <taxon>Craniata</taxon>
        <taxon>Vertebrata</taxon>
        <taxon>Euteleostomi</taxon>
        <taxon>Mammalia</taxon>
        <taxon>Eutheria</taxon>
        <taxon>Laurasiatheria</taxon>
        <taxon>Artiodactyla</taxon>
        <taxon>Ruminantia</taxon>
        <taxon>Pecora</taxon>
        <taxon>Bovidae</taxon>
        <taxon>Bovinae</taxon>
        <taxon>Bos</taxon>
    </lineage>
</organism>
<evidence type="ECO:0000250" key="1"/>
<evidence type="ECO:0000250" key="2">
    <source>
        <dbReference type="UniProtKB" id="P32519"/>
    </source>
</evidence>
<evidence type="ECO:0000255" key="3">
    <source>
        <dbReference type="PROSITE-ProRule" id="PRU00237"/>
    </source>
</evidence>
<evidence type="ECO:0000256" key="4">
    <source>
        <dbReference type="SAM" id="MobiDB-lite"/>
    </source>
</evidence>
<evidence type="ECO:0000305" key="5"/>
<name>ELF1_BOVIN</name>